<evidence type="ECO:0000255" key="1">
    <source>
        <dbReference type="HAMAP-Rule" id="MF_00337"/>
    </source>
</evidence>
<gene>
    <name evidence="1" type="primary">xseB</name>
    <name type="ordered locus">JTY_1140</name>
</gene>
<keyword id="KW-0963">Cytoplasm</keyword>
<keyword id="KW-0269">Exonuclease</keyword>
<keyword id="KW-0378">Hydrolase</keyword>
<keyword id="KW-0540">Nuclease</keyword>
<organism>
    <name type="scientific">Mycobacterium bovis (strain BCG / Tokyo 172 / ATCC 35737 / TMC 1019)</name>
    <dbReference type="NCBI Taxonomy" id="561275"/>
    <lineage>
        <taxon>Bacteria</taxon>
        <taxon>Bacillati</taxon>
        <taxon>Actinomycetota</taxon>
        <taxon>Actinomycetes</taxon>
        <taxon>Mycobacteriales</taxon>
        <taxon>Mycobacteriaceae</taxon>
        <taxon>Mycobacterium</taxon>
        <taxon>Mycobacterium tuberculosis complex</taxon>
    </lineage>
</organism>
<dbReference type="EC" id="3.1.11.6" evidence="1"/>
<dbReference type="EMBL" id="AP010918">
    <property type="protein sequence ID" value="BAH25430.1"/>
    <property type="molecule type" value="Genomic_DNA"/>
</dbReference>
<dbReference type="RefSeq" id="WP_003405844.1">
    <property type="nucleotide sequence ID" value="NZ_CP014566.1"/>
</dbReference>
<dbReference type="SMR" id="C1AMA1"/>
<dbReference type="KEGG" id="mbt:JTY_1140"/>
<dbReference type="HOGENOM" id="CLU_145918_0_2_11"/>
<dbReference type="GO" id="GO:0005829">
    <property type="term" value="C:cytosol"/>
    <property type="evidence" value="ECO:0007669"/>
    <property type="project" value="TreeGrafter"/>
</dbReference>
<dbReference type="GO" id="GO:0009318">
    <property type="term" value="C:exodeoxyribonuclease VII complex"/>
    <property type="evidence" value="ECO:0007669"/>
    <property type="project" value="InterPro"/>
</dbReference>
<dbReference type="GO" id="GO:0008855">
    <property type="term" value="F:exodeoxyribonuclease VII activity"/>
    <property type="evidence" value="ECO:0007669"/>
    <property type="project" value="UniProtKB-UniRule"/>
</dbReference>
<dbReference type="GO" id="GO:0006308">
    <property type="term" value="P:DNA catabolic process"/>
    <property type="evidence" value="ECO:0007669"/>
    <property type="project" value="UniProtKB-UniRule"/>
</dbReference>
<dbReference type="FunFam" id="1.10.287.1040:FF:000004">
    <property type="entry name" value="Exodeoxyribonuclease 7 small subunit"/>
    <property type="match status" value="1"/>
</dbReference>
<dbReference type="Gene3D" id="1.10.287.1040">
    <property type="entry name" value="Exonuclease VII, small subunit"/>
    <property type="match status" value="1"/>
</dbReference>
<dbReference type="HAMAP" id="MF_00337">
    <property type="entry name" value="Exonuc_7_S"/>
    <property type="match status" value="1"/>
</dbReference>
<dbReference type="InterPro" id="IPR003761">
    <property type="entry name" value="Exonuc_VII_S"/>
</dbReference>
<dbReference type="InterPro" id="IPR037004">
    <property type="entry name" value="Exonuc_VII_ssu_sf"/>
</dbReference>
<dbReference type="NCBIfam" id="NF002139">
    <property type="entry name" value="PRK00977.1-3"/>
    <property type="match status" value="1"/>
</dbReference>
<dbReference type="NCBIfam" id="TIGR01280">
    <property type="entry name" value="xseB"/>
    <property type="match status" value="1"/>
</dbReference>
<dbReference type="PANTHER" id="PTHR34137">
    <property type="entry name" value="EXODEOXYRIBONUCLEASE 7 SMALL SUBUNIT"/>
    <property type="match status" value="1"/>
</dbReference>
<dbReference type="PANTHER" id="PTHR34137:SF1">
    <property type="entry name" value="EXODEOXYRIBONUCLEASE 7 SMALL SUBUNIT"/>
    <property type="match status" value="1"/>
</dbReference>
<dbReference type="Pfam" id="PF02609">
    <property type="entry name" value="Exonuc_VII_S"/>
    <property type="match status" value="1"/>
</dbReference>
<dbReference type="PIRSF" id="PIRSF006488">
    <property type="entry name" value="Exonuc_VII_S"/>
    <property type="match status" value="1"/>
</dbReference>
<dbReference type="SUPFAM" id="SSF116842">
    <property type="entry name" value="XseB-like"/>
    <property type="match status" value="1"/>
</dbReference>
<reference key="1">
    <citation type="journal article" date="2009" name="Vaccine">
        <title>Whole genome sequence analysis of Mycobacterium bovis bacillus Calmette-Guerin (BCG) Tokyo 172: a comparative study of BCG vaccine substrains.</title>
        <authorList>
            <person name="Seki M."/>
            <person name="Honda I."/>
            <person name="Fujita I."/>
            <person name="Yano I."/>
            <person name="Yamamoto S."/>
            <person name="Koyama A."/>
        </authorList>
    </citation>
    <scope>NUCLEOTIDE SEQUENCE [LARGE SCALE GENOMIC DNA]</scope>
    <source>
        <strain>BCG / Tokyo 172 / ATCC 35737 / TMC 1019</strain>
    </source>
</reference>
<accession>C1AMA1</accession>
<name>EX7S_MYCBT</name>
<comment type="function">
    <text evidence="1">Bidirectionally degrades single-stranded DNA into large acid-insoluble oligonucleotides, which are then degraded further into small acid-soluble oligonucleotides.</text>
</comment>
<comment type="catalytic activity">
    <reaction evidence="1">
        <text>Exonucleolytic cleavage in either 5'- to 3'- or 3'- to 5'-direction to yield nucleoside 5'-phosphates.</text>
        <dbReference type="EC" id="3.1.11.6"/>
    </reaction>
</comment>
<comment type="subunit">
    <text evidence="1">Heterooligomer composed of large and small subunits.</text>
</comment>
<comment type="subcellular location">
    <subcellularLocation>
        <location evidence="1">Cytoplasm</location>
    </subcellularLocation>
</comment>
<comment type="similarity">
    <text evidence="1">Belongs to the XseB family.</text>
</comment>
<sequence>MVCDPNGDDTGRTHATVPVSQLGYEACRDELMEVVRLLEQGGLDLDASLRLWERGEQLAKRCEEHLAGARQRVSDVLAGDEAQNG</sequence>
<protein>
    <recommendedName>
        <fullName evidence="1">Exodeoxyribonuclease 7 small subunit</fullName>
        <ecNumber evidence="1">3.1.11.6</ecNumber>
    </recommendedName>
    <alternativeName>
        <fullName evidence="1">Exodeoxyribonuclease VII small subunit</fullName>
        <shortName evidence="1">Exonuclease VII small subunit</shortName>
    </alternativeName>
</protein>
<feature type="chain" id="PRO_1000200257" description="Exodeoxyribonuclease 7 small subunit">
    <location>
        <begin position="1"/>
        <end position="85"/>
    </location>
</feature>
<proteinExistence type="inferred from homology"/>